<reference key="1">
    <citation type="journal article" date="2011" name="J. Biol. Chem.">
        <title>Sandalwood fragrance biosynthesis involves sesquiterpene synthases of both the terpene synthase (TPS)-a and TPS-b Subfamilies, including santalene synthases.</title>
        <authorList>
            <person name="Jones C.G."/>
            <person name="Moniodis J."/>
            <person name="Zulak K.G."/>
            <person name="Scaffidi A."/>
            <person name="Plummer J.A."/>
            <person name="Ghisalberti E.L."/>
            <person name="Barbour E.L."/>
            <person name="Bohlmann J."/>
        </authorList>
    </citation>
    <scope>NUCLEOTIDE SEQUENCE [MRNA]</scope>
    <scope>FUNCTION</scope>
</reference>
<keyword id="KW-0456">Lyase</keyword>
<keyword id="KW-0460">Magnesium</keyword>
<keyword id="KW-0464">Manganese</keyword>
<keyword id="KW-0479">Metal-binding</keyword>
<evidence type="ECO:0000250" key="1">
    <source>
        <dbReference type="UniProtKB" id="A0A1C9J6A7"/>
    </source>
</evidence>
<evidence type="ECO:0000250" key="2">
    <source>
        <dbReference type="UniProtKB" id="Q40577"/>
    </source>
</evidence>
<evidence type="ECO:0000269" key="3">
    <source>
    </source>
</evidence>
<evidence type="ECO:0000305" key="4"/>
<accession>E3W206</accession>
<feature type="chain" id="PRO_0000418946" description="Alpha-bisabolol synthase">
    <location>
        <begin position="1"/>
        <end position="576"/>
    </location>
</feature>
<feature type="short sequence motif" description="DDXXD motif" evidence="2">
    <location>
        <begin position="323"/>
        <end position="327"/>
    </location>
</feature>
<feature type="binding site" evidence="2">
    <location>
        <position position="286"/>
    </location>
    <ligand>
        <name>(2E,6E)-farnesyl diphosphate</name>
        <dbReference type="ChEBI" id="CHEBI:175763"/>
    </ligand>
</feature>
<feature type="binding site" evidence="2">
    <location>
        <position position="323"/>
    </location>
    <ligand>
        <name>(2E,6E)-farnesyl diphosphate</name>
        <dbReference type="ChEBI" id="CHEBI:175763"/>
    </ligand>
</feature>
<feature type="binding site" evidence="2">
    <location>
        <position position="323"/>
    </location>
    <ligand>
        <name>Mg(2+)</name>
        <dbReference type="ChEBI" id="CHEBI:18420"/>
        <label>1</label>
    </ligand>
</feature>
<feature type="binding site" evidence="2">
    <location>
        <position position="323"/>
    </location>
    <ligand>
        <name>Mg(2+)</name>
        <dbReference type="ChEBI" id="CHEBI:18420"/>
        <label>2</label>
    </ligand>
</feature>
<feature type="binding site" evidence="2">
    <location>
        <position position="327"/>
    </location>
    <ligand>
        <name>(2E,6E)-farnesyl diphosphate</name>
        <dbReference type="ChEBI" id="CHEBI:175763"/>
    </ligand>
</feature>
<feature type="binding site" evidence="2">
    <location>
        <position position="327"/>
    </location>
    <ligand>
        <name>Mg(2+)</name>
        <dbReference type="ChEBI" id="CHEBI:18420"/>
        <label>1</label>
    </ligand>
</feature>
<feature type="binding site" evidence="2">
    <location>
        <position position="327"/>
    </location>
    <ligand>
        <name>Mg(2+)</name>
        <dbReference type="ChEBI" id="CHEBI:18420"/>
        <label>2</label>
    </ligand>
</feature>
<feature type="binding site" evidence="2">
    <location>
        <position position="466"/>
    </location>
    <ligand>
        <name>(2E,6E)-farnesyl diphosphate</name>
        <dbReference type="ChEBI" id="CHEBI:175763"/>
    </ligand>
</feature>
<feature type="binding site" evidence="2">
    <location>
        <position position="469"/>
    </location>
    <ligand>
        <name>(2E,6E)-farnesyl diphosphate</name>
        <dbReference type="ChEBI" id="CHEBI:175763"/>
    </ligand>
</feature>
<feature type="binding site" evidence="2">
    <location>
        <position position="469"/>
    </location>
    <ligand>
        <name>Mg(2+)</name>
        <dbReference type="ChEBI" id="CHEBI:18420"/>
        <label>3</label>
    </ligand>
</feature>
<feature type="binding site" evidence="2">
    <location>
        <position position="473"/>
    </location>
    <ligand>
        <name>Mg(2+)</name>
        <dbReference type="ChEBI" id="CHEBI:18420"/>
        <label>3</label>
    </ligand>
</feature>
<feature type="binding site" evidence="2">
    <location>
        <position position="477"/>
    </location>
    <ligand>
        <name>Mg(2+)</name>
        <dbReference type="ChEBI" id="CHEBI:18420"/>
        <label>3</label>
    </ligand>
</feature>
<name>SPIBS_SANSP</name>
<protein>
    <recommendedName>
        <fullName>Alpha-bisabolol synthase</fullName>
        <shortName>SspiBS</shortName>
        <ecNumber evidence="3">4.2.3.-</ecNumber>
    </recommendedName>
</protein>
<sequence length="576" mass="65775">MDAFATSPTTALFETVNCNAHVAPMAGEDSSENRPASNYKPSTWDYEFLQSLATTNNTVGEKHTRMADKLKEEVKSMMKGTMEPVAKLELINIVQRLGLKYRFESEIKEELFSLYKDGTDAWWVGNLHATALRFRLLRENGIFVPQDVFETFKDKSGEFKSQLCKDVRGLLSLYEASYLGWEGEELLDEAKKFSTTNLNNVKESISSNTLGRLVKHALNLPLHWSAARYEARWFIDEYEREENVIPNLLKYAKLDFNVVQSIHQKELGNLARWWVETGLDKLGFVRNTLMQNFMWGCAMAFEPQYGKVRDAAVKLGSLITMVDDVYDVYGTLEELEIFTDIVDRWDINGIDKLPRNISMIVLTMFNTANQISYDLLRDRGFNSIPHIAEAWATLCKTYLKEAKWYHSGYKPTLEEYLENGLVSISFVLSLVTAYLQTERLENLTYESAAYVNSVPPLVRYSGLLNRLYNDLGTSSAEIARGDTLKSIQCYMTQTGATEEVAREHIKGLVHEAWKGMNRCLFEQTPLAEPFVGFNVNTVRGSQFFYQHGDGYAVTESWTKDLSLSVLIHPIPLNEED</sequence>
<comment type="function">
    <text evidence="3">Produces a mixture of beta-bisabolene and alpha-bisabolol, along with traces of alpha-bisabolene and farnesene isomers from (2E,6E)-farnesyl diphosphate in fragrance biosynthesis.</text>
</comment>
<comment type="cofactor">
    <cofactor evidence="1">
        <name>Mg(2+)</name>
        <dbReference type="ChEBI" id="CHEBI:18420"/>
    </cofactor>
    <cofactor evidence="1">
        <name>Mn(2+)</name>
        <dbReference type="ChEBI" id="CHEBI:29035"/>
    </cofactor>
    <text evidence="1">Binds 3 Mg(2+) or Mn(2+) ions per subunit.</text>
</comment>
<comment type="domain">
    <text evidence="2">The Asp-Asp-Xaa-Xaa-Asp/Glu (DDXXD/E) motif is important for the catalytic activity, presumably through binding to Mg(2+).</text>
</comment>
<comment type="similarity">
    <text evidence="4">Belongs to the terpene synthase family. Tpsb subfamily.</text>
</comment>
<dbReference type="EC" id="4.2.3.-" evidence="3"/>
<dbReference type="EMBL" id="HQ343280">
    <property type="protein sequence ID" value="ADO87004.1"/>
    <property type="molecule type" value="mRNA"/>
</dbReference>
<dbReference type="SMR" id="E3W206"/>
<dbReference type="GO" id="GO:0000287">
    <property type="term" value="F:magnesium ion binding"/>
    <property type="evidence" value="ECO:0007669"/>
    <property type="project" value="InterPro"/>
</dbReference>
<dbReference type="GO" id="GO:0010333">
    <property type="term" value="F:terpene synthase activity"/>
    <property type="evidence" value="ECO:0007669"/>
    <property type="project" value="InterPro"/>
</dbReference>
<dbReference type="GO" id="GO:0016102">
    <property type="term" value="P:diterpenoid biosynthetic process"/>
    <property type="evidence" value="ECO:0007669"/>
    <property type="project" value="InterPro"/>
</dbReference>
<dbReference type="CDD" id="cd00684">
    <property type="entry name" value="Terpene_cyclase_plant_C1"/>
    <property type="match status" value="1"/>
</dbReference>
<dbReference type="FunFam" id="1.10.600.10:FF:000007">
    <property type="entry name" value="Isoprene synthase, chloroplastic"/>
    <property type="match status" value="1"/>
</dbReference>
<dbReference type="FunFam" id="1.50.10.130:FF:000001">
    <property type="entry name" value="Isoprene synthase, chloroplastic"/>
    <property type="match status" value="1"/>
</dbReference>
<dbReference type="Gene3D" id="1.10.600.10">
    <property type="entry name" value="Farnesyl Diphosphate Synthase"/>
    <property type="match status" value="1"/>
</dbReference>
<dbReference type="Gene3D" id="1.50.10.130">
    <property type="entry name" value="Terpene synthase, N-terminal domain"/>
    <property type="match status" value="1"/>
</dbReference>
<dbReference type="InterPro" id="IPR008949">
    <property type="entry name" value="Isoprenoid_synthase_dom_sf"/>
</dbReference>
<dbReference type="InterPro" id="IPR034741">
    <property type="entry name" value="Terpene_cyclase-like_1_C"/>
</dbReference>
<dbReference type="InterPro" id="IPR044814">
    <property type="entry name" value="Terpene_cyclase_plant_C1"/>
</dbReference>
<dbReference type="InterPro" id="IPR001906">
    <property type="entry name" value="Terpene_synth_N"/>
</dbReference>
<dbReference type="InterPro" id="IPR036965">
    <property type="entry name" value="Terpene_synth_N_sf"/>
</dbReference>
<dbReference type="InterPro" id="IPR050148">
    <property type="entry name" value="Terpene_synthase-like"/>
</dbReference>
<dbReference type="InterPro" id="IPR005630">
    <property type="entry name" value="Terpene_synthase_metal-bd"/>
</dbReference>
<dbReference type="InterPro" id="IPR008930">
    <property type="entry name" value="Terpenoid_cyclase/PrenylTrfase"/>
</dbReference>
<dbReference type="PANTHER" id="PTHR31225:SF245">
    <property type="entry name" value="(-)-ALPHA-TERPINEOL SYNTHASE-LIKE"/>
    <property type="match status" value="1"/>
</dbReference>
<dbReference type="PANTHER" id="PTHR31225">
    <property type="entry name" value="OS04G0344100 PROTEIN-RELATED"/>
    <property type="match status" value="1"/>
</dbReference>
<dbReference type="Pfam" id="PF01397">
    <property type="entry name" value="Terpene_synth"/>
    <property type="match status" value="1"/>
</dbReference>
<dbReference type="Pfam" id="PF03936">
    <property type="entry name" value="Terpene_synth_C"/>
    <property type="match status" value="1"/>
</dbReference>
<dbReference type="SFLD" id="SFLDS00005">
    <property type="entry name" value="Isoprenoid_Synthase_Type_I"/>
    <property type="match status" value="1"/>
</dbReference>
<dbReference type="SFLD" id="SFLDG01019">
    <property type="entry name" value="Terpene_Cyclase_Like_1_C_Termi"/>
    <property type="match status" value="1"/>
</dbReference>
<dbReference type="SUPFAM" id="SSF48239">
    <property type="entry name" value="Terpenoid cyclases/Protein prenyltransferases"/>
    <property type="match status" value="1"/>
</dbReference>
<dbReference type="SUPFAM" id="SSF48576">
    <property type="entry name" value="Terpenoid synthases"/>
    <property type="match status" value="1"/>
</dbReference>
<proteinExistence type="evidence at transcript level"/>
<organism>
    <name type="scientific">Santalum spicatum</name>
    <name type="common">Australian sandalwood</name>
    <dbReference type="NCBI Taxonomy" id="453088"/>
    <lineage>
        <taxon>Eukaryota</taxon>
        <taxon>Viridiplantae</taxon>
        <taxon>Streptophyta</taxon>
        <taxon>Embryophyta</taxon>
        <taxon>Tracheophyta</taxon>
        <taxon>Spermatophyta</taxon>
        <taxon>Magnoliopsida</taxon>
        <taxon>eudicotyledons</taxon>
        <taxon>Gunneridae</taxon>
        <taxon>Pentapetalae</taxon>
        <taxon>Santalales</taxon>
        <taxon>Santalaceae</taxon>
        <taxon>Santalum</taxon>
    </lineage>
</organism>